<comment type="catalytic activity">
    <reaction evidence="1">
        <text>(6R)-10-formyltetrahydrofolate + 5-amino-1-(5-phospho-beta-D-ribosyl)imidazole-4-carboxamide = 5-formamido-1-(5-phospho-D-ribosyl)imidazole-4-carboxamide + (6S)-5,6,7,8-tetrahydrofolate</text>
        <dbReference type="Rhea" id="RHEA:22192"/>
        <dbReference type="ChEBI" id="CHEBI:57453"/>
        <dbReference type="ChEBI" id="CHEBI:58467"/>
        <dbReference type="ChEBI" id="CHEBI:58475"/>
        <dbReference type="ChEBI" id="CHEBI:195366"/>
        <dbReference type="EC" id="2.1.2.3"/>
    </reaction>
</comment>
<comment type="catalytic activity">
    <reaction evidence="1">
        <text>IMP + H2O = 5-formamido-1-(5-phospho-D-ribosyl)imidazole-4-carboxamide</text>
        <dbReference type="Rhea" id="RHEA:18445"/>
        <dbReference type="ChEBI" id="CHEBI:15377"/>
        <dbReference type="ChEBI" id="CHEBI:58053"/>
        <dbReference type="ChEBI" id="CHEBI:58467"/>
        <dbReference type="EC" id="3.5.4.10"/>
    </reaction>
</comment>
<comment type="pathway">
    <text evidence="1">Purine metabolism; IMP biosynthesis via de novo pathway; 5-formamido-1-(5-phospho-D-ribosyl)imidazole-4-carboxamide from 5-amino-1-(5-phospho-D-ribosyl)imidazole-4-carboxamide (10-formyl THF route): step 1/1.</text>
</comment>
<comment type="pathway">
    <text evidence="1">Purine metabolism; IMP biosynthesis via de novo pathway; IMP from 5-formamido-1-(5-phospho-D-ribosyl)imidazole-4-carboxamide: step 1/1.</text>
</comment>
<comment type="domain">
    <text evidence="1">The IMP cyclohydrolase activity resides in the N-terminal region.</text>
</comment>
<comment type="similarity">
    <text evidence="1">Belongs to the PurH family.</text>
</comment>
<name>PUR9_BURM7</name>
<gene>
    <name evidence="1" type="primary">purH</name>
    <name type="ordered locus">BMA10247_2535</name>
</gene>
<accession>A3MP76</accession>
<reference key="1">
    <citation type="journal article" date="2010" name="Genome Biol. Evol.">
        <title>Continuing evolution of Burkholderia mallei through genome reduction and large-scale rearrangements.</title>
        <authorList>
            <person name="Losada L."/>
            <person name="Ronning C.M."/>
            <person name="DeShazer D."/>
            <person name="Woods D."/>
            <person name="Fedorova N."/>
            <person name="Kim H.S."/>
            <person name="Shabalina S.A."/>
            <person name="Pearson T.R."/>
            <person name="Brinkac L."/>
            <person name="Tan P."/>
            <person name="Nandi T."/>
            <person name="Crabtree J."/>
            <person name="Badger J."/>
            <person name="Beckstrom-Sternberg S."/>
            <person name="Saqib M."/>
            <person name="Schutzer S.E."/>
            <person name="Keim P."/>
            <person name="Nierman W.C."/>
        </authorList>
    </citation>
    <scope>NUCLEOTIDE SEQUENCE [LARGE SCALE GENOMIC DNA]</scope>
    <source>
        <strain>NCTC 10247</strain>
    </source>
</reference>
<evidence type="ECO:0000255" key="1">
    <source>
        <dbReference type="HAMAP-Rule" id="MF_00139"/>
    </source>
</evidence>
<evidence type="ECO:0000255" key="2">
    <source>
        <dbReference type="PROSITE-ProRule" id="PRU01202"/>
    </source>
</evidence>
<feature type="chain" id="PRO_1000018854" description="Bifunctional purine biosynthesis protein PurH">
    <location>
        <begin position="1"/>
        <end position="521"/>
    </location>
</feature>
<feature type="domain" description="MGS-like" evidence="2">
    <location>
        <begin position="1"/>
        <end position="145"/>
    </location>
</feature>
<dbReference type="EC" id="2.1.2.3" evidence="1"/>
<dbReference type="EC" id="3.5.4.10" evidence="1"/>
<dbReference type="EMBL" id="CP000548">
    <property type="protein sequence ID" value="ABO04653.1"/>
    <property type="molecule type" value="Genomic_DNA"/>
</dbReference>
<dbReference type="RefSeq" id="WP_004194285.1">
    <property type="nucleotide sequence ID" value="NZ_CP007802.1"/>
</dbReference>
<dbReference type="SMR" id="A3MP76"/>
<dbReference type="GeneID" id="92980050"/>
<dbReference type="KEGG" id="bmaz:BM44_769"/>
<dbReference type="KEGG" id="bmn:BMA10247_2535"/>
<dbReference type="PATRIC" id="fig|320389.8.peg.854"/>
<dbReference type="UniPathway" id="UPA00074">
    <property type="reaction ID" value="UER00133"/>
</dbReference>
<dbReference type="UniPathway" id="UPA00074">
    <property type="reaction ID" value="UER00135"/>
</dbReference>
<dbReference type="GO" id="GO:0005829">
    <property type="term" value="C:cytosol"/>
    <property type="evidence" value="ECO:0007669"/>
    <property type="project" value="TreeGrafter"/>
</dbReference>
<dbReference type="GO" id="GO:0003937">
    <property type="term" value="F:IMP cyclohydrolase activity"/>
    <property type="evidence" value="ECO:0007669"/>
    <property type="project" value="UniProtKB-UniRule"/>
</dbReference>
<dbReference type="GO" id="GO:0004643">
    <property type="term" value="F:phosphoribosylaminoimidazolecarboxamide formyltransferase activity"/>
    <property type="evidence" value="ECO:0007669"/>
    <property type="project" value="UniProtKB-UniRule"/>
</dbReference>
<dbReference type="GO" id="GO:0006189">
    <property type="term" value="P:'de novo' IMP biosynthetic process"/>
    <property type="evidence" value="ECO:0007669"/>
    <property type="project" value="UniProtKB-UniRule"/>
</dbReference>
<dbReference type="CDD" id="cd01421">
    <property type="entry name" value="IMPCH"/>
    <property type="match status" value="1"/>
</dbReference>
<dbReference type="FunFam" id="3.40.140.20:FF:000001">
    <property type="entry name" value="Bifunctional purine biosynthesis protein PurH"/>
    <property type="match status" value="1"/>
</dbReference>
<dbReference type="FunFam" id="3.40.140.20:FF:000002">
    <property type="entry name" value="Bifunctional purine biosynthesis protein PurH"/>
    <property type="match status" value="1"/>
</dbReference>
<dbReference type="FunFam" id="3.40.50.1380:FF:000001">
    <property type="entry name" value="Bifunctional purine biosynthesis protein PurH"/>
    <property type="match status" value="1"/>
</dbReference>
<dbReference type="Gene3D" id="3.40.140.20">
    <property type="match status" value="2"/>
</dbReference>
<dbReference type="Gene3D" id="3.40.50.1380">
    <property type="entry name" value="Methylglyoxal synthase-like domain"/>
    <property type="match status" value="1"/>
</dbReference>
<dbReference type="HAMAP" id="MF_00139">
    <property type="entry name" value="PurH"/>
    <property type="match status" value="1"/>
</dbReference>
<dbReference type="InterPro" id="IPR024051">
    <property type="entry name" value="AICAR_Tfase_dup_dom_sf"/>
</dbReference>
<dbReference type="InterPro" id="IPR016193">
    <property type="entry name" value="Cytidine_deaminase-like"/>
</dbReference>
<dbReference type="InterPro" id="IPR011607">
    <property type="entry name" value="MGS-like_dom"/>
</dbReference>
<dbReference type="InterPro" id="IPR036914">
    <property type="entry name" value="MGS-like_dom_sf"/>
</dbReference>
<dbReference type="InterPro" id="IPR002695">
    <property type="entry name" value="PurH-like"/>
</dbReference>
<dbReference type="NCBIfam" id="NF002049">
    <property type="entry name" value="PRK00881.1"/>
    <property type="match status" value="1"/>
</dbReference>
<dbReference type="NCBIfam" id="TIGR00355">
    <property type="entry name" value="purH"/>
    <property type="match status" value="1"/>
</dbReference>
<dbReference type="PANTHER" id="PTHR11692:SF0">
    <property type="entry name" value="BIFUNCTIONAL PURINE BIOSYNTHESIS PROTEIN ATIC"/>
    <property type="match status" value="1"/>
</dbReference>
<dbReference type="PANTHER" id="PTHR11692">
    <property type="entry name" value="BIFUNCTIONAL PURINE BIOSYNTHESIS PROTEIN PURH"/>
    <property type="match status" value="1"/>
</dbReference>
<dbReference type="Pfam" id="PF01808">
    <property type="entry name" value="AICARFT_IMPCHas"/>
    <property type="match status" value="1"/>
</dbReference>
<dbReference type="Pfam" id="PF02142">
    <property type="entry name" value="MGS"/>
    <property type="match status" value="1"/>
</dbReference>
<dbReference type="PIRSF" id="PIRSF000414">
    <property type="entry name" value="AICARFT_IMPCHas"/>
    <property type="match status" value="1"/>
</dbReference>
<dbReference type="SMART" id="SM00798">
    <property type="entry name" value="AICARFT_IMPCHas"/>
    <property type="match status" value="1"/>
</dbReference>
<dbReference type="SMART" id="SM00851">
    <property type="entry name" value="MGS"/>
    <property type="match status" value="1"/>
</dbReference>
<dbReference type="SUPFAM" id="SSF53927">
    <property type="entry name" value="Cytidine deaminase-like"/>
    <property type="match status" value="1"/>
</dbReference>
<dbReference type="SUPFAM" id="SSF52335">
    <property type="entry name" value="Methylglyoxal synthase-like"/>
    <property type="match status" value="1"/>
</dbReference>
<dbReference type="PROSITE" id="PS51855">
    <property type="entry name" value="MGS"/>
    <property type="match status" value="1"/>
</dbReference>
<protein>
    <recommendedName>
        <fullName evidence="1">Bifunctional purine biosynthesis protein PurH</fullName>
    </recommendedName>
    <domain>
        <recommendedName>
            <fullName evidence="1">Phosphoribosylaminoimidazolecarboxamide formyltransferase</fullName>
            <ecNumber evidence="1">2.1.2.3</ecNumber>
        </recommendedName>
        <alternativeName>
            <fullName evidence="1">AICAR transformylase</fullName>
        </alternativeName>
    </domain>
    <domain>
        <recommendedName>
            <fullName evidence="1">IMP cyclohydrolase</fullName>
            <ecNumber evidence="1">3.5.4.10</ecNumber>
        </recommendedName>
        <alternativeName>
            <fullName evidence="1">ATIC</fullName>
        </alternativeName>
        <alternativeName>
            <fullName evidence="1">IMP synthase</fullName>
        </alternativeName>
        <alternativeName>
            <fullName evidence="1">Inosinicase</fullName>
        </alternativeName>
    </domain>
</protein>
<sequence length="521" mass="55458">MIKQALISVSDKTGIVDFAKALSALGVKLLSTGGTAKLLADAGLPVTEVADYTGFPEMLDGRVKTLHPKVHGGILARRDLPEHMQALEAHGIPTIDLLVVNLYPFVQTIAKDDCTLADAIENIDIGGPTMLRSAAKNHRDVTVVVDPADYAVVLDEMKANGNTLGYKTNFRLATKVFAHTAQYDGAITNYLTSLGDDLQHGSRSAYPATLNLAFDKVQDLRYGENPHQSAAFYRDVATPAGALANYRQLQGKELSYNNIADSDAAWECVKTFDAPACVIIKHANPCGVAVGADAGEAYAKAFQTDPTSAFGGIIAFNREVDEAAAQAVAKQFVEVLIAPSFSDAAKQVFAAKQNVRLLEIALGEGHNAFDLKRVGGGLLVQSLDSKNVQPRELRVVTKRHPTPKEMDDLLFAWRVAKYVKSNAIVFCGNGMTLGVGAGQMSRVDSARIASIKAQNAGLTLAGSAVASDAFFPFRDGLDVVVAAGATCVIQPGGSVRDDEVIAAADEHNIAMVVTGVRHFRH</sequence>
<organism>
    <name type="scientific">Burkholderia mallei (strain NCTC 10247)</name>
    <dbReference type="NCBI Taxonomy" id="320389"/>
    <lineage>
        <taxon>Bacteria</taxon>
        <taxon>Pseudomonadati</taxon>
        <taxon>Pseudomonadota</taxon>
        <taxon>Betaproteobacteria</taxon>
        <taxon>Burkholderiales</taxon>
        <taxon>Burkholderiaceae</taxon>
        <taxon>Burkholderia</taxon>
        <taxon>pseudomallei group</taxon>
    </lineage>
</organism>
<proteinExistence type="inferred from homology"/>
<keyword id="KW-0378">Hydrolase</keyword>
<keyword id="KW-0511">Multifunctional enzyme</keyword>
<keyword id="KW-0658">Purine biosynthesis</keyword>
<keyword id="KW-0808">Transferase</keyword>